<protein>
    <recommendedName>
        <fullName evidence="7">Probable cyclic di-GMP phosphodiesterase PdeC</fullName>
        <ecNumber evidence="1">3.1.4.52</ecNumber>
    </recommendedName>
</protein>
<proteinExistence type="evidence at protein level"/>
<keyword id="KW-0973">c-di-GMP</keyword>
<keyword id="KW-0997">Cell inner membrane</keyword>
<keyword id="KW-1003">Cell membrane</keyword>
<keyword id="KW-0378">Hydrolase</keyword>
<keyword id="KW-0472">Membrane</keyword>
<keyword id="KW-1185">Reference proteome</keyword>
<keyword id="KW-0812">Transmembrane</keyword>
<keyword id="KW-1133">Transmembrane helix</keyword>
<organism>
    <name type="scientific">Escherichia coli (strain K12)</name>
    <dbReference type="NCBI Taxonomy" id="83333"/>
    <lineage>
        <taxon>Bacteria</taxon>
        <taxon>Pseudomonadati</taxon>
        <taxon>Pseudomonadota</taxon>
        <taxon>Gammaproteobacteria</taxon>
        <taxon>Enterobacterales</taxon>
        <taxon>Enterobacteriaceae</taxon>
        <taxon>Escherichia</taxon>
    </lineage>
</organism>
<sequence>MSHRARHQLLALPGIIFLVLFPIILSLWIAFLWAKSEVNNQLRTFAQLALDKSELVIRQADLVSDAAERYQGQVCTPAHQKRMLNIIRGYLYINELIYARDNHFLCSSLIAPVNGYTIAPADYKREPNVSIYYYRDTPFFSGYKMTYMQRGNYVAVINPLFWSEVMSDDPTLQWGVYDTVTKTFFSLSKEASAATFSPLIHLKDLTVQRNGYLYATVYSTKRPIAAIVATSYQRLITHFYNHLIFALPAGILGSLVLLLLWLRIRQNYLSPKRKLQRALEKHQLCLYYQPIIDIKTEKCIGAEALLRWPGEQGQIMNPAEFIPLAEKEGMIEQITDYVIDNVFRDLGDYLATHADRYVSINLSASDFHTSRLIARINQKTEQYAVRPQQIKFEVTEHAFLDVDKMTPIILAFRQAGYEVAIDDFGIGYSNLHNLKSLNVDILKIDKSFVETLTTHKTSHLIAEHIIELAHSLGLKTIAEGVETEEQVNWLRKRGVRYCQGWFFAKAMPPQVFMQWMEQLPARELTRGQ</sequence>
<accession>P32701</accession>
<accession>P76789</accession>
<accession>Q2M6P3</accession>
<feature type="chain" id="PRO_0000169719" description="Probable cyclic di-GMP phosphodiesterase PdeC">
    <location>
        <begin position="1"/>
        <end position="528"/>
    </location>
</feature>
<feature type="transmembrane region" description="Helical" evidence="2">
    <location>
        <begin position="14"/>
        <end position="34"/>
    </location>
</feature>
<feature type="transmembrane region" description="Helical" evidence="2">
    <location>
        <begin position="242"/>
        <end position="262"/>
    </location>
</feature>
<feature type="domain" description="EAL" evidence="3">
    <location>
        <begin position="268"/>
        <end position="520"/>
    </location>
</feature>
<reference key="1">
    <citation type="journal article" date="1993" name="Nucleic Acids Res.">
        <title>Analysis of the Escherichia coli genome. IV. DNA sequence of the region from 89.2 to 92.8 minutes.</title>
        <authorList>
            <person name="Blattner F.R."/>
            <person name="Burland V.D."/>
            <person name="Plunkett G. III"/>
            <person name="Sofia H.J."/>
            <person name="Daniels D.L."/>
        </authorList>
    </citation>
    <scope>NUCLEOTIDE SEQUENCE [LARGE SCALE GENOMIC DNA]</scope>
    <source>
        <strain>K12 / MG1655 / ATCC 47076</strain>
    </source>
</reference>
<reference key="2">
    <citation type="journal article" date="1997" name="Science">
        <title>The complete genome sequence of Escherichia coli K-12.</title>
        <authorList>
            <person name="Blattner F.R."/>
            <person name="Plunkett G. III"/>
            <person name="Bloch C.A."/>
            <person name="Perna N.T."/>
            <person name="Burland V."/>
            <person name="Riley M."/>
            <person name="Collado-Vides J."/>
            <person name="Glasner J.D."/>
            <person name="Rode C.K."/>
            <person name="Mayhew G.F."/>
            <person name="Gregor J."/>
            <person name="Davis N.W."/>
            <person name="Kirkpatrick H.A."/>
            <person name="Goeden M.A."/>
            <person name="Rose D.J."/>
            <person name="Mau B."/>
            <person name="Shao Y."/>
        </authorList>
    </citation>
    <scope>NUCLEOTIDE SEQUENCE [LARGE SCALE GENOMIC DNA]</scope>
    <source>
        <strain>K12 / MG1655 / ATCC 47076</strain>
    </source>
</reference>
<reference key="3">
    <citation type="journal article" date="2006" name="Mol. Syst. Biol.">
        <title>Highly accurate genome sequences of Escherichia coli K-12 strains MG1655 and W3110.</title>
        <authorList>
            <person name="Hayashi K."/>
            <person name="Morooka N."/>
            <person name="Yamamoto Y."/>
            <person name="Fujita K."/>
            <person name="Isono K."/>
            <person name="Choi S."/>
            <person name="Ohtsubo E."/>
            <person name="Baba T."/>
            <person name="Wanner B.L."/>
            <person name="Mori H."/>
            <person name="Horiuchi T."/>
        </authorList>
    </citation>
    <scope>NUCLEOTIDE SEQUENCE [LARGE SCALE GENOMIC DNA]</scope>
    <source>
        <strain>K12 / W3110 / ATCC 27325 / DSM 5911</strain>
    </source>
</reference>
<reference key="4">
    <citation type="journal article" date="2009" name="Microbiology">
        <title>Gene expression patterns and differential input into curli fimbriae regulation of all GGDEF/EAL domain proteins in Escherichia coli.</title>
        <authorList>
            <person name="Sommerfeldt N."/>
            <person name="Possling A."/>
            <person name="Becker G."/>
            <person name="Pesavento C."/>
            <person name="Tschowri N."/>
            <person name="Hengge R."/>
        </authorList>
    </citation>
    <scope>INDUCTION</scope>
    <scope>RPOS-DEPENDENCE</scope>
    <source>
        <strain>K12 / W3110 / ATCC 27325 / DSM 5911</strain>
    </source>
</reference>
<reference key="5">
    <citation type="journal article" date="2009" name="Mol. Microbiol.">
        <title>Second messenger signalling governs Escherichia coli biofilm induction upon ribosomal stress.</title>
        <authorList>
            <person name="Boehm A."/>
            <person name="Steiner S."/>
            <person name="Zaehringer F."/>
            <person name="Casanova A."/>
            <person name="Hamburger F."/>
            <person name="Ritz D."/>
            <person name="Keck W."/>
            <person name="Ackermann M."/>
            <person name="Schirmer T."/>
            <person name="Jenal U."/>
        </authorList>
    </citation>
    <scope>FUNCTION IN BIOFILM FORMATION</scope>
    <source>
        <strain>K12 / AB400</strain>
    </source>
</reference>
<reference key="6">
    <citation type="journal article" date="2015" name="J. Bacteriol.">
        <title>Systematic nomenclature for GGDEF and EAL domain-containing cyclic di-GMP turnover proteins of Escherichia coli.</title>
        <authorList>
            <person name="Hengge R."/>
            <person name="Galperin M.Y."/>
            <person name="Ghigo J.M."/>
            <person name="Gomelsky M."/>
            <person name="Green J."/>
            <person name="Hughes K.T."/>
            <person name="Jenal U."/>
            <person name="Landini P."/>
        </authorList>
    </citation>
    <scope>NOMENCLATURE</scope>
</reference>
<gene>
    <name evidence="6" type="primary">pdeC</name>
    <name type="synonym">yjcC</name>
    <name type="ordered locus">b4061</name>
    <name type="ordered locus">JW4022</name>
</gene>
<name>PDEC_ECOLI</name>
<evidence type="ECO:0000250" key="1">
    <source>
        <dbReference type="UniProtKB" id="P21514"/>
    </source>
</evidence>
<evidence type="ECO:0000255" key="2"/>
<evidence type="ECO:0000255" key="3">
    <source>
        <dbReference type="PROSITE-ProRule" id="PRU00074"/>
    </source>
</evidence>
<evidence type="ECO:0000269" key="4">
    <source>
    </source>
</evidence>
<evidence type="ECO:0000269" key="5">
    <source>
    </source>
</evidence>
<evidence type="ECO:0000303" key="6">
    <source>
    </source>
</evidence>
<evidence type="ECO:0000305" key="7"/>
<dbReference type="EC" id="3.1.4.52" evidence="1"/>
<dbReference type="EMBL" id="U00006">
    <property type="protein sequence ID" value="AAC43155.1"/>
    <property type="molecule type" value="Genomic_DNA"/>
</dbReference>
<dbReference type="EMBL" id="U00096">
    <property type="protein sequence ID" value="AAC77031.1"/>
    <property type="molecule type" value="Genomic_DNA"/>
</dbReference>
<dbReference type="EMBL" id="AP009048">
    <property type="protein sequence ID" value="BAE78063.1"/>
    <property type="molecule type" value="Genomic_DNA"/>
</dbReference>
<dbReference type="PIR" id="D65214">
    <property type="entry name" value="D65214"/>
</dbReference>
<dbReference type="RefSeq" id="NP_418485.1">
    <property type="nucleotide sequence ID" value="NC_000913.3"/>
</dbReference>
<dbReference type="RefSeq" id="WP_000019548.1">
    <property type="nucleotide sequence ID" value="NZ_SSZK01000016.1"/>
</dbReference>
<dbReference type="SMR" id="P32701"/>
<dbReference type="BioGRID" id="4260840">
    <property type="interactions" value="9"/>
</dbReference>
<dbReference type="DIP" id="DIP-12548N"/>
<dbReference type="FunCoup" id="P32701">
    <property type="interactions" value="60"/>
</dbReference>
<dbReference type="IntAct" id="P32701">
    <property type="interactions" value="6"/>
</dbReference>
<dbReference type="STRING" id="511145.b4061"/>
<dbReference type="PaxDb" id="511145-b4061"/>
<dbReference type="EnsemblBacteria" id="AAC77031">
    <property type="protein sequence ID" value="AAC77031"/>
    <property type="gene ID" value="b4061"/>
</dbReference>
<dbReference type="GeneID" id="948568"/>
<dbReference type="KEGG" id="ecj:JW4022"/>
<dbReference type="KEGG" id="eco:b4061"/>
<dbReference type="KEGG" id="ecoc:C3026_21945"/>
<dbReference type="PATRIC" id="fig|511145.12.peg.4182"/>
<dbReference type="EchoBASE" id="EB1882"/>
<dbReference type="eggNOG" id="COG4943">
    <property type="taxonomic scope" value="Bacteria"/>
</dbReference>
<dbReference type="HOGENOM" id="CLU_000445_131_1_6"/>
<dbReference type="InParanoid" id="P32701"/>
<dbReference type="OMA" id="RLIAHFY"/>
<dbReference type="OrthoDB" id="9812358at2"/>
<dbReference type="PhylomeDB" id="P32701"/>
<dbReference type="BioCyc" id="EcoCyc:EG11938-MONOMER"/>
<dbReference type="BioCyc" id="MetaCyc:EG11938-MONOMER"/>
<dbReference type="BRENDA" id="3.1.4.52">
    <property type="organism ID" value="2026"/>
</dbReference>
<dbReference type="PRO" id="PR:P32701"/>
<dbReference type="Proteomes" id="UP000000625">
    <property type="component" value="Chromosome"/>
</dbReference>
<dbReference type="GO" id="GO:0005886">
    <property type="term" value="C:plasma membrane"/>
    <property type="evidence" value="ECO:0000314"/>
    <property type="project" value="EcoCyc"/>
</dbReference>
<dbReference type="GO" id="GO:0071111">
    <property type="term" value="F:cyclic-guanylate-specific phosphodiesterase activity"/>
    <property type="evidence" value="ECO:0000314"/>
    <property type="project" value="EcoCyc"/>
</dbReference>
<dbReference type="GO" id="GO:1900190">
    <property type="term" value="P:regulation of single-species biofilm formation"/>
    <property type="evidence" value="ECO:0000318"/>
    <property type="project" value="GO_Central"/>
</dbReference>
<dbReference type="CDD" id="cd01948">
    <property type="entry name" value="EAL"/>
    <property type="match status" value="1"/>
</dbReference>
<dbReference type="FunFam" id="3.20.20.450:FF:000010">
    <property type="entry name" value="Cyclic diguanylate phosphodiesterase (EAL) domain protein"/>
    <property type="match status" value="1"/>
</dbReference>
<dbReference type="Gene3D" id="3.20.20.450">
    <property type="entry name" value="EAL domain"/>
    <property type="match status" value="1"/>
</dbReference>
<dbReference type="InterPro" id="IPR024744">
    <property type="entry name" value="CSS-motif_dom"/>
</dbReference>
<dbReference type="InterPro" id="IPR050706">
    <property type="entry name" value="Cyclic-di-GMP_PDE-like"/>
</dbReference>
<dbReference type="InterPro" id="IPR001633">
    <property type="entry name" value="EAL_dom"/>
</dbReference>
<dbReference type="InterPro" id="IPR035919">
    <property type="entry name" value="EAL_sf"/>
</dbReference>
<dbReference type="PANTHER" id="PTHR33121:SF60">
    <property type="entry name" value="CYCLIC DI-GMP PHOSPHODIESTERASE PDEC-RELATED"/>
    <property type="match status" value="1"/>
</dbReference>
<dbReference type="PANTHER" id="PTHR33121">
    <property type="entry name" value="CYCLIC DI-GMP PHOSPHODIESTERASE PDEF"/>
    <property type="match status" value="1"/>
</dbReference>
<dbReference type="Pfam" id="PF12792">
    <property type="entry name" value="CSS-motif"/>
    <property type="match status" value="1"/>
</dbReference>
<dbReference type="Pfam" id="PF00563">
    <property type="entry name" value="EAL"/>
    <property type="match status" value="1"/>
</dbReference>
<dbReference type="SMART" id="SM00052">
    <property type="entry name" value="EAL"/>
    <property type="match status" value="1"/>
</dbReference>
<dbReference type="SUPFAM" id="SSF141868">
    <property type="entry name" value="EAL domain-like"/>
    <property type="match status" value="1"/>
</dbReference>
<dbReference type="PROSITE" id="PS50883">
    <property type="entry name" value="EAL"/>
    <property type="match status" value="1"/>
</dbReference>
<comment type="function">
    <text evidence="1 5">Phosphodiesterase (PDE) that catalyzes the hydrolysis of cyclic-di-GMP (c-di-GMP) to 5'-pGpG (By similarity). Cyclic-di-GMP is a second messenger which controls cell surface-associated traits in bacteria. Overexpression reduces biofilm formation (PubMed:19460094).</text>
</comment>
<comment type="catalytic activity">
    <reaction evidence="1">
        <text>3',3'-c-di-GMP + H2O = 5'-phosphoguanylyl(3'-&gt;5')guanosine + H(+)</text>
        <dbReference type="Rhea" id="RHEA:24902"/>
        <dbReference type="ChEBI" id="CHEBI:15377"/>
        <dbReference type="ChEBI" id="CHEBI:15378"/>
        <dbReference type="ChEBI" id="CHEBI:58754"/>
        <dbReference type="ChEBI" id="CHEBI:58805"/>
        <dbReference type="EC" id="3.1.4.52"/>
    </reaction>
</comment>
<comment type="subcellular location">
    <subcellularLocation>
        <location evidence="7">Cell inner membrane</location>
        <topology evidence="2">Multi-pass membrane protein</topology>
    </subcellularLocation>
</comment>
<comment type="induction">
    <text evidence="4">Expressed during transition into stationary phase, at both 28 and 37 degrees Celsius. Expression is RpoS dependent.</text>
</comment>